<feature type="chain" id="PRO_1000137822" description="DnaA regulatory inactivator Hda">
    <location>
        <begin position="1"/>
        <end position="241"/>
    </location>
</feature>
<evidence type="ECO:0000250" key="1"/>
<evidence type="ECO:0000255" key="2">
    <source>
        <dbReference type="HAMAP-Rule" id="MF_01158"/>
    </source>
</evidence>
<proteinExistence type="inferred from homology"/>
<organism>
    <name type="scientific">Salmonella paratyphi A (strain AKU_12601)</name>
    <dbReference type="NCBI Taxonomy" id="554290"/>
    <lineage>
        <taxon>Bacteria</taxon>
        <taxon>Pseudomonadati</taxon>
        <taxon>Pseudomonadota</taxon>
        <taxon>Gammaproteobacteria</taxon>
        <taxon>Enterobacterales</taxon>
        <taxon>Enterobacteriaceae</taxon>
        <taxon>Salmonella</taxon>
    </lineage>
</organism>
<accession>B5BB08</accession>
<gene>
    <name evidence="2" type="primary">hda</name>
    <name type="ordered locus">SSPA0347</name>
</gene>
<sequence length="241" mass="27532">MSFWVEVSLNTPAQLSLPLYLPDDETFASFWPGDNASLLAALQNVLRQEHSGYIYLWAREGAGRSHLLHAACAELSQRGDAVGYVPLDKRTWFVPEVLDGMEHLSLVCIDNIECVAGDELWEMAIFDLYNRILESGKTRLLITGDRPPRQLNLGLPDLASRLDWGQIYKLQPLSDEDKLQALQLRARLRGFELPEDVGRFLLKRLDREMRTLFMTLDQLDHASITAQRKLTIPFVKEILKL</sequence>
<reference key="1">
    <citation type="journal article" date="2009" name="BMC Genomics">
        <title>Pseudogene accumulation in the evolutionary histories of Salmonella enterica serovars Paratyphi A and Typhi.</title>
        <authorList>
            <person name="Holt K.E."/>
            <person name="Thomson N.R."/>
            <person name="Wain J."/>
            <person name="Langridge G.C."/>
            <person name="Hasan R."/>
            <person name="Bhutta Z.A."/>
            <person name="Quail M.A."/>
            <person name="Norbertczak H."/>
            <person name="Walker D."/>
            <person name="Simmonds M."/>
            <person name="White B."/>
            <person name="Bason N."/>
            <person name="Mungall K."/>
            <person name="Dougan G."/>
            <person name="Parkhill J."/>
        </authorList>
    </citation>
    <scope>NUCLEOTIDE SEQUENCE [LARGE SCALE GENOMIC DNA]</scope>
    <source>
        <strain>AKU_12601</strain>
    </source>
</reference>
<protein>
    <recommendedName>
        <fullName evidence="2">DnaA regulatory inactivator Hda</fullName>
    </recommendedName>
</protein>
<keyword id="KW-0235">DNA replication</keyword>
<keyword id="KW-0236">DNA replication inhibitor</keyword>
<dbReference type="EMBL" id="FM200053">
    <property type="protein sequence ID" value="CAR58469.1"/>
    <property type="molecule type" value="Genomic_DNA"/>
</dbReference>
<dbReference type="SMR" id="B5BB08"/>
<dbReference type="KEGG" id="sek:SSPA0347"/>
<dbReference type="HOGENOM" id="CLU_072265_1_1_6"/>
<dbReference type="Proteomes" id="UP000001869">
    <property type="component" value="Chromosome"/>
</dbReference>
<dbReference type="GO" id="GO:0006270">
    <property type="term" value="P:DNA replication initiation"/>
    <property type="evidence" value="ECO:0007669"/>
    <property type="project" value="TreeGrafter"/>
</dbReference>
<dbReference type="GO" id="GO:0032297">
    <property type="term" value="P:negative regulation of DNA-templated DNA replication initiation"/>
    <property type="evidence" value="ECO:0007669"/>
    <property type="project" value="InterPro"/>
</dbReference>
<dbReference type="FunFam" id="1.10.8.60:FF:000024">
    <property type="entry name" value="DnaA regulatory inactivator Hda"/>
    <property type="match status" value="1"/>
</dbReference>
<dbReference type="FunFam" id="3.40.50.300:FF:000452">
    <property type="entry name" value="DnaA regulatory inactivator Hda"/>
    <property type="match status" value="1"/>
</dbReference>
<dbReference type="Gene3D" id="1.10.8.60">
    <property type="match status" value="1"/>
</dbReference>
<dbReference type="Gene3D" id="3.40.50.300">
    <property type="entry name" value="P-loop containing nucleotide triphosphate hydrolases"/>
    <property type="match status" value="1"/>
</dbReference>
<dbReference type="HAMAP" id="MF_01158">
    <property type="entry name" value="Hda"/>
    <property type="match status" value="1"/>
</dbReference>
<dbReference type="InterPro" id="IPR020591">
    <property type="entry name" value="Chromosome_initiator_DnaA-like"/>
</dbReference>
<dbReference type="InterPro" id="IPR013317">
    <property type="entry name" value="DnaA_dom"/>
</dbReference>
<dbReference type="InterPro" id="IPR017788">
    <property type="entry name" value="Hda"/>
</dbReference>
<dbReference type="InterPro" id="IPR022864">
    <property type="entry name" value="Hda_Enterobact"/>
</dbReference>
<dbReference type="InterPro" id="IPR055199">
    <property type="entry name" value="Hda_lid"/>
</dbReference>
<dbReference type="InterPro" id="IPR027417">
    <property type="entry name" value="P-loop_NTPase"/>
</dbReference>
<dbReference type="NCBIfam" id="TIGR03420">
    <property type="entry name" value="DnaA_homol_Hda"/>
    <property type="match status" value="1"/>
</dbReference>
<dbReference type="NCBIfam" id="NF005982">
    <property type="entry name" value="PRK08084.1"/>
    <property type="match status" value="1"/>
</dbReference>
<dbReference type="PANTHER" id="PTHR30050">
    <property type="entry name" value="CHROMOSOMAL REPLICATION INITIATOR PROTEIN DNAA"/>
    <property type="match status" value="1"/>
</dbReference>
<dbReference type="PANTHER" id="PTHR30050:SF5">
    <property type="entry name" value="DNAA REGULATORY INACTIVATOR HDA"/>
    <property type="match status" value="1"/>
</dbReference>
<dbReference type="Pfam" id="PF00308">
    <property type="entry name" value="Bac_DnaA"/>
    <property type="match status" value="1"/>
</dbReference>
<dbReference type="Pfam" id="PF22688">
    <property type="entry name" value="Hda_lid"/>
    <property type="match status" value="1"/>
</dbReference>
<dbReference type="PRINTS" id="PR00051">
    <property type="entry name" value="DNAA"/>
</dbReference>
<dbReference type="SUPFAM" id="SSF52540">
    <property type="entry name" value="P-loop containing nucleoside triphosphate hydrolases"/>
    <property type="match status" value="1"/>
</dbReference>
<comment type="function">
    <text evidence="1">Mediates the interaction of DNA replication initiator protein DnaA with DNA polymerase subunit beta sliding clamp (dnaN). Stimulates hydrolysis of ATP-DnaA to ADP-DnaA, rendering DnaA inactive for reinitiation, a process called regulatory inhibition of DnaA or RIDA (By similarity).</text>
</comment>
<comment type="subunit">
    <text evidence="2">The active form seems to be an ADP-bound monomer. Forms the RIDA complex (regulatory inactivation of DnaA) of ATP-DnaA, ADP-Hda and the DNA-loaded beta sliding clamp (dnaN).</text>
</comment>
<comment type="similarity">
    <text evidence="2">Belongs to the DnaA family. HdA subfamily.</text>
</comment>
<name>HDA_SALPK</name>